<keyword id="KW-0963">Cytoplasm</keyword>
<keyword id="KW-0238">DNA-binding</keyword>
<keyword id="KW-0520">NAD</keyword>
<keyword id="KW-0678">Repressor</keyword>
<keyword id="KW-0804">Transcription</keyword>
<keyword id="KW-0805">Transcription regulation</keyword>
<reference key="1">
    <citation type="journal article" date="2006" name="Lancet">
        <title>Complete genome sequence of USA300, an epidemic clone of community-acquired meticillin-resistant Staphylococcus aureus.</title>
        <authorList>
            <person name="Diep B.A."/>
            <person name="Gill S.R."/>
            <person name="Chang R.F."/>
            <person name="Phan T.H."/>
            <person name="Chen J.H."/>
            <person name="Davidson M.G."/>
            <person name="Lin F."/>
            <person name="Lin J."/>
            <person name="Carleton H.A."/>
            <person name="Mongodin E.F."/>
            <person name="Sensabaugh G.F."/>
            <person name="Perdreau-Remington F."/>
        </authorList>
    </citation>
    <scope>NUCLEOTIDE SEQUENCE [LARGE SCALE GENOMIC DNA]</scope>
    <source>
        <strain>USA300</strain>
    </source>
</reference>
<accession>Q2FF78</accession>
<organism>
    <name type="scientific">Staphylococcus aureus (strain USA300)</name>
    <dbReference type="NCBI Taxonomy" id="367830"/>
    <lineage>
        <taxon>Bacteria</taxon>
        <taxon>Bacillati</taxon>
        <taxon>Bacillota</taxon>
        <taxon>Bacilli</taxon>
        <taxon>Bacillales</taxon>
        <taxon>Staphylococcaceae</taxon>
        <taxon>Staphylococcus</taxon>
    </lineage>
</organism>
<evidence type="ECO:0000255" key="1">
    <source>
        <dbReference type="HAMAP-Rule" id="MF_01131"/>
    </source>
</evidence>
<sequence length="211" mass="23599">MSDQVKIPRATLKRLPLYYRFVSSLKSKGIDRVNSKAISDALQIDSATIRRDFSYFGELGKKGYGYNIDSLLDFFKSELSESDMIKIAIVGVGNLGKALLTYNFSIHDDMTITEAFDVKEDVIGQKIGNVIVKDNDELITTLKKEEIDVVILTTPERVAQKVADELVQAGVKGILNFTPGRINTPSDVQVHQIDLGIELQSLLFFMKNYSE</sequence>
<gene>
    <name evidence="1" type="primary">rex</name>
    <name type="ordered locus">SAUSA300_1999</name>
</gene>
<name>REX_STAA3</name>
<comment type="function">
    <text evidence="1">Modulates transcription in response to changes in cellular NADH/NAD(+) redox state.</text>
</comment>
<comment type="subunit">
    <text evidence="1">Homodimer.</text>
</comment>
<comment type="subcellular location">
    <subcellularLocation>
        <location evidence="1">Cytoplasm</location>
    </subcellularLocation>
</comment>
<comment type="similarity">
    <text evidence="1">Belongs to the transcriptional regulatory Rex family.</text>
</comment>
<dbReference type="EMBL" id="CP000255">
    <property type="protein sequence ID" value="ABD21255.1"/>
    <property type="molecule type" value="Genomic_DNA"/>
</dbReference>
<dbReference type="RefSeq" id="WP_001283612.1">
    <property type="nucleotide sequence ID" value="NZ_CP027476.1"/>
</dbReference>
<dbReference type="SMR" id="Q2FF78"/>
<dbReference type="KEGG" id="saa:SAUSA300_1999"/>
<dbReference type="HOGENOM" id="CLU_061534_1_1_9"/>
<dbReference type="Proteomes" id="UP000001939">
    <property type="component" value="Chromosome"/>
</dbReference>
<dbReference type="GO" id="GO:0005737">
    <property type="term" value="C:cytoplasm"/>
    <property type="evidence" value="ECO:0007669"/>
    <property type="project" value="UniProtKB-SubCell"/>
</dbReference>
<dbReference type="GO" id="GO:0003677">
    <property type="term" value="F:DNA binding"/>
    <property type="evidence" value="ECO:0007669"/>
    <property type="project" value="UniProtKB-UniRule"/>
</dbReference>
<dbReference type="GO" id="GO:0003700">
    <property type="term" value="F:DNA-binding transcription factor activity"/>
    <property type="evidence" value="ECO:0007669"/>
    <property type="project" value="UniProtKB-UniRule"/>
</dbReference>
<dbReference type="GO" id="GO:0045892">
    <property type="term" value="P:negative regulation of DNA-templated transcription"/>
    <property type="evidence" value="ECO:0007669"/>
    <property type="project" value="InterPro"/>
</dbReference>
<dbReference type="GO" id="GO:0051775">
    <property type="term" value="P:response to redox state"/>
    <property type="evidence" value="ECO:0007669"/>
    <property type="project" value="InterPro"/>
</dbReference>
<dbReference type="Gene3D" id="3.40.50.720">
    <property type="entry name" value="NAD(P)-binding Rossmann-like Domain"/>
    <property type="match status" value="1"/>
</dbReference>
<dbReference type="Gene3D" id="1.10.10.10">
    <property type="entry name" value="Winged helix-like DNA-binding domain superfamily/Winged helix DNA-binding domain"/>
    <property type="match status" value="1"/>
</dbReference>
<dbReference type="HAMAP" id="MF_01131">
    <property type="entry name" value="Rex"/>
    <property type="match status" value="1"/>
</dbReference>
<dbReference type="InterPro" id="IPR003781">
    <property type="entry name" value="CoA-bd"/>
</dbReference>
<dbReference type="InterPro" id="IPR036291">
    <property type="entry name" value="NAD(P)-bd_dom_sf"/>
</dbReference>
<dbReference type="InterPro" id="IPR009718">
    <property type="entry name" value="Rex_DNA-bd_C_dom"/>
</dbReference>
<dbReference type="InterPro" id="IPR022876">
    <property type="entry name" value="Tscrpt_rep_Rex"/>
</dbReference>
<dbReference type="InterPro" id="IPR036388">
    <property type="entry name" value="WH-like_DNA-bd_sf"/>
</dbReference>
<dbReference type="InterPro" id="IPR036390">
    <property type="entry name" value="WH_DNA-bd_sf"/>
</dbReference>
<dbReference type="NCBIfam" id="NF003989">
    <property type="entry name" value="PRK05472.1-3"/>
    <property type="match status" value="1"/>
</dbReference>
<dbReference type="NCBIfam" id="NF003991">
    <property type="entry name" value="PRK05472.1-5"/>
    <property type="match status" value="1"/>
</dbReference>
<dbReference type="NCBIfam" id="NF003994">
    <property type="entry name" value="PRK05472.2-3"/>
    <property type="match status" value="1"/>
</dbReference>
<dbReference type="NCBIfam" id="NF003995">
    <property type="entry name" value="PRK05472.2-4"/>
    <property type="match status" value="1"/>
</dbReference>
<dbReference type="NCBIfam" id="NF003996">
    <property type="entry name" value="PRK05472.2-5"/>
    <property type="match status" value="1"/>
</dbReference>
<dbReference type="PANTHER" id="PTHR35786">
    <property type="entry name" value="REDOX-SENSING TRANSCRIPTIONAL REPRESSOR REX"/>
    <property type="match status" value="1"/>
</dbReference>
<dbReference type="PANTHER" id="PTHR35786:SF1">
    <property type="entry name" value="REDOX-SENSING TRANSCRIPTIONAL REPRESSOR REX 1"/>
    <property type="match status" value="1"/>
</dbReference>
<dbReference type="Pfam" id="PF02629">
    <property type="entry name" value="CoA_binding"/>
    <property type="match status" value="1"/>
</dbReference>
<dbReference type="Pfam" id="PF06971">
    <property type="entry name" value="Put_DNA-bind_N"/>
    <property type="match status" value="1"/>
</dbReference>
<dbReference type="SMART" id="SM00881">
    <property type="entry name" value="CoA_binding"/>
    <property type="match status" value="1"/>
</dbReference>
<dbReference type="SUPFAM" id="SSF51735">
    <property type="entry name" value="NAD(P)-binding Rossmann-fold domains"/>
    <property type="match status" value="1"/>
</dbReference>
<dbReference type="SUPFAM" id="SSF46785">
    <property type="entry name" value="Winged helix' DNA-binding domain"/>
    <property type="match status" value="1"/>
</dbReference>
<proteinExistence type="inferred from homology"/>
<feature type="chain" id="PRO_1000065416" description="Redox-sensing transcriptional repressor Rex">
    <location>
        <begin position="1"/>
        <end position="211"/>
    </location>
</feature>
<feature type="DNA-binding region" description="H-T-H motif" evidence="1">
    <location>
        <begin position="17"/>
        <end position="56"/>
    </location>
</feature>
<feature type="binding site" evidence="1">
    <location>
        <begin position="91"/>
        <end position="96"/>
    </location>
    <ligand>
        <name>NAD(+)</name>
        <dbReference type="ChEBI" id="CHEBI:57540"/>
    </ligand>
</feature>
<protein>
    <recommendedName>
        <fullName evidence="1">Redox-sensing transcriptional repressor Rex</fullName>
    </recommendedName>
</protein>